<sequence length="883" mass="99039">MSSGANITYASRKRRKPVQKTVKPIPAEGIKSNPSKRHRDRLNTELDRLASLLPFPQDVINKLDKLSVLRLSVSYLRAKSFFDVALKSTPADRNGGQDQCRAQIRDWQDLQEGEFLLQALNGFVLVVTADALVFYASSTIQDYLGFQQSDVIHQSVYELIHTEDRAEFQRQLHWALNPDSAQGVDEAHGPPQAAVYYTPDQLPPENASFMERCFRCRLRCLLDNSSGFLAMNFQGRLKYLHGQNKKGKDGALLPPQLALFAIATPLQPPSILEIRTKNFIFRTKHKLDFTPIGCDAKGQLILGYTEVELCTRGSGYQFIHAADMLHCAESHIRMIKTGESGMTVFRLLAKHSRWRWVQSNARLIYRNGRPDYIIATQRPLTDEEGREHLQKRSTSLPFMFATGEAVLYEISSPFSPIMDPLPIRTKSNTSRKDWAPQSTPSKDSFHPSSLMSALIQQDESIYLCPPSSPAPLDSHFLMGSVSKCGSWQDSFAAAGSEAALKHEQIGHAQDVNLALSGGPSELFPDNKNNDLYNIMRNLGIDFEDIRSMQNEEFFRTDSTAAGEVDFKDIDITDEILTYVQDSLNNSTLMNSACQQQPVTQHLSCMLQERLQLEQQQQLQQPPPQALEPQQQLCQMVCPQQDLGPKHTQINGTFASWNPTPPVSFNCPQQELKHYQLFSSLQGTAQEFPYKPEVDSVPYTQNFAPCNQPLLPEHSKSVQLDFPGRDFEPSLHPTTSNLDFVSCLQVPENQSHGINSQSAMVSPQAYYAGAMSMYQCQPGPQRTPVDQTQYSSEIPGSQAFLSKVQSRGVFNETYSSDLSSIDHAVQTTGHLHHLAEARPLPDISHLVGSCSSHARMKFIQEQDTGTVRVGHQYTFSKTDFDSCI</sequence>
<proteinExistence type="evidence at transcript level"/>
<name>AHR_MUSMM</name>
<protein>
    <recommendedName>
        <fullName>Aryl hydrocarbon receptor</fullName>
        <shortName>Ah receptor</shortName>
        <shortName>AhR</shortName>
    </recommendedName>
</protein>
<comment type="function">
    <text evidence="2">Ligand-activated transcription factor that enables cells to adapt to changing conditions by sensing compounds from the environment, diet, microbiome and cellular metabolism, and which plays important roles in development, immunity and cancer. Upon ligand binding, translocates into the nucleus, where it heterodimerizes with ARNT and induces transcription by binding to xenobiotic response elements (XRE). Regulates a variety of biological processes, including angiogenesis, hematopoiesis, drug and lipid metabolism, cell motility and immune modulation. Xenobiotics can act as ligands: upon xenobiotic-binding, activates the expression of multiple phase I and II xenobiotic chemical metabolizing enzyme genes (such as the CYP1A1 gene). Mediates biochemical and toxic effects of halogenated aromatic hydrocarbons. Next to xenobiotics, natural ligands derived from plants, microbiota, and endogenous metabolism are potent AHR agonists. Tryptophan (Trp) derivatives constitute an important class of endogenous AHR ligands. Acts as a negative regulator of anti-tumor immunity: indoles and kynurenic acid generated by Trp catabolism act as ligand and activate AHR, thereby promoting AHR-driven cancer cell motility and suppressing adaptive immunity. Regulates the circadian clock by inhibiting the basal and circadian expression of the core circadian component PER1. Inhibits PER1 by repressing the CLOCK-BMAL1 heterodimer mediated transcriptional activation of PER1. The heterodimer ARNT:AHR binds to core DNA sequence 5'-TGCGTG-3' within the dioxin response element (DRE) of target gene promoters and activates their transcription.</text>
</comment>
<comment type="subunit">
    <text evidence="1 2">Homodimer (By similarity). Heterodimer; efficient DNA binding requires dimerization with another bHLH protein. Interacts with ARNT; the heterodimer ARNT:AHR binds to core DNA sequence 5'-TGCGTG-3' within the dioxin response element (DRE) of target gene promoters and activates their transcription (By similarity). Binds MYBBP1A (By similarity). Interacts with coactivators including SRC-1, RIP140 and NOCA7, and with the corepressor SMRT. Interacts with NEDD8 and IVNS1ABP (By similarity). Interacts with BMAL1. Interacts with HSP90AB1 (By similarity). Interacts with TIPARP; leading to mono-ADP-ribosylation of AHR and subsequent inhibition of AHR (By similarity).</text>
</comment>
<comment type="subcellular location">
    <subcellularLocation>
        <location evidence="1">Cytoplasm</location>
    </subcellularLocation>
    <subcellularLocation>
        <location evidence="1">Nucleus</location>
    </subcellularLocation>
    <text evidence="1">Initially cytoplasmic; upon binding with ligand and interaction with a HSP90, it translocates to the nucleus.</text>
</comment>
<comment type="domain">
    <text evidence="1">The PAS 1 domain is essential for dimerization and also required for AHR:ARNT heterodimerization.</text>
</comment>
<comment type="PTM">
    <text evidence="2">Mono-ADP-ribosylated, leading to inhibit transcription activator activity of AHR.</text>
</comment>
<dbReference type="EMBL" id="AF405568">
    <property type="protein sequence ID" value="AAL89733.1"/>
    <property type="molecule type" value="mRNA"/>
</dbReference>
<dbReference type="SMR" id="Q8R4S5"/>
<dbReference type="AGR" id="MGI:105043"/>
<dbReference type="MGI" id="MGI:105043">
    <property type="gene designation" value="Ahr"/>
</dbReference>
<dbReference type="GO" id="GO:0005737">
    <property type="term" value="C:cytoplasm"/>
    <property type="evidence" value="ECO:0000250"/>
    <property type="project" value="UniProtKB"/>
</dbReference>
<dbReference type="GO" id="GO:0034753">
    <property type="term" value="C:nuclear aryl hydrocarbon receptor complex"/>
    <property type="evidence" value="ECO:0000250"/>
    <property type="project" value="UniProtKB"/>
</dbReference>
<dbReference type="GO" id="GO:0005634">
    <property type="term" value="C:nucleus"/>
    <property type="evidence" value="ECO:0000314"/>
    <property type="project" value="UniProt"/>
</dbReference>
<dbReference type="GO" id="GO:0070888">
    <property type="term" value="F:E-box binding"/>
    <property type="evidence" value="ECO:0000250"/>
    <property type="project" value="UniProtKB"/>
</dbReference>
<dbReference type="GO" id="GO:0004879">
    <property type="term" value="F:nuclear receptor activity"/>
    <property type="evidence" value="ECO:0000314"/>
    <property type="project" value="UniProt"/>
</dbReference>
<dbReference type="GO" id="GO:0046982">
    <property type="term" value="F:protein heterodimerization activity"/>
    <property type="evidence" value="ECO:0000250"/>
    <property type="project" value="UniProtKB"/>
</dbReference>
<dbReference type="GO" id="GO:0042803">
    <property type="term" value="F:protein homodimerization activity"/>
    <property type="evidence" value="ECO:0000250"/>
    <property type="project" value="UniProtKB"/>
</dbReference>
<dbReference type="GO" id="GO:1990837">
    <property type="term" value="F:sequence-specific double-stranded DNA binding"/>
    <property type="evidence" value="ECO:0000250"/>
    <property type="project" value="UniProtKB"/>
</dbReference>
<dbReference type="GO" id="GO:1904613">
    <property type="term" value="P:cellular response to 2,3,7,8-tetrachlorodibenzodioxine"/>
    <property type="evidence" value="ECO:0000314"/>
    <property type="project" value="UniProt"/>
</dbReference>
<dbReference type="GO" id="GO:1904682">
    <property type="term" value="P:cellular response to 3-methylcholanthrene"/>
    <property type="evidence" value="ECO:0000250"/>
    <property type="project" value="UniProtKB"/>
</dbReference>
<dbReference type="GO" id="GO:0032922">
    <property type="term" value="P:circadian regulation of gene expression"/>
    <property type="evidence" value="ECO:0000250"/>
    <property type="project" value="UniProtKB"/>
</dbReference>
<dbReference type="GO" id="GO:0045892">
    <property type="term" value="P:negative regulation of DNA-templated transcription"/>
    <property type="evidence" value="ECO:0000250"/>
    <property type="project" value="UniProtKB"/>
</dbReference>
<dbReference type="GO" id="GO:0002841">
    <property type="term" value="P:negative regulation of T cell mediated immune response to tumor cell"/>
    <property type="evidence" value="ECO:0000250"/>
    <property type="project" value="UniProtKB"/>
</dbReference>
<dbReference type="GO" id="GO:0045944">
    <property type="term" value="P:positive regulation of transcription by RNA polymerase II"/>
    <property type="evidence" value="ECO:0000250"/>
    <property type="project" value="UniProtKB"/>
</dbReference>
<dbReference type="GO" id="GO:0002819">
    <property type="term" value="P:regulation of adaptive immune response"/>
    <property type="evidence" value="ECO:0000250"/>
    <property type="project" value="UniProtKB"/>
</dbReference>
<dbReference type="GO" id="GO:0006355">
    <property type="term" value="P:regulation of DNA-templated transcription"/>
    <property type="evidence" value="ECO:0000250"/>
    <property type="project" value="UniProtKB"/>
</dbReference>
<dbReference type="GO" id="GO:0009410">
    <property type="term" value="P:response to xenobiotic stimulus"/>
    <property type="evidence" value="ECO:0000250"/>
    <property type="project" value="UniProtKB"/>
</dbReference>
<dbReference type="GO" id="GO:0006366">
    <property type="term" value="P:transcription by RNA polymerase II"/>
    <property type="evidence" value="ECO:0000250"/>
    <property type="project" value="UniProtKB"/>
</dbReference>
<dbReference type="GO" id="GO:0006805">
    <property type="term" value="P:xenobiotic metabolic process"/>
    <property type="evidence" value="ECO:0007669"/>
    <property type="project" value="InterPro"/>
</dbReference>
<dbReference type="CDD" id="cd11436">
    <property type="entry name" value="bHLH-PAS_AhR"/>
    <property type="match status" value="1"/>
</dbReference>
<dbReference type="CDD" id="cd00130">
    <property type="entry name" value="PAS"/>
    <property type="match status" value="2"/>
</dbReference>
<dbReference type="FunFam" id="3.30.450.20:FF:000035">
    <property type="entry name" value="Aryl hydrocarbon receptor"/>
    <property type="match status" value="1"/>
</dbReference>
<dbReference type="FunFam" id="3.30.450.20:FF:000019">
    <property type="entry name" value="Aryl hydrocarbon receptor 1"/>
    <property type="match status" value="1"/>
</dbReference>
<dbReference type="FunFam" id="4.10.280.10:FF:000024">
    <property type="entry name" value="Aryl hydrocarbon receptor 2"/>
    <property type="match status" value="1"/>
</dbReference>
<dbReference type="Gene3D" id="4.10.280.10">
    <property type="entry name" value="Helix-loop-helix DNA-binding domain"/>
    <property type="match status" value="1"/>
</dbReference>
<dbReference type="Gene3D" id="3.30.450.20">
    <property type="entry name" value="PAS domain"/>
    <property type="match status" value="2"/>
</dbReference>
<dbReference type="InterPro" id="IPR039091">
    <property type="entry name" value="AHR/AHRR"/>
</dbReference>
<dbReference type="InterPro" id="IPR033348">
    <property type="entry name" value="AHR_bHLH"/>
</dbReference>
<dbReference type="InterPro" id="IPR011598">
    <property type="entry name" value="bHLH_dom"/>
</dbReference>
<dbReference type="InterPro" id="IPR036638">
    <property type="entry name" value="HLH_DNA-bd_sf"/>
</dbReference>
<dbReference type="InterPro" id="IPR001610">
    <property type="entry name" value="PAC"/>
</dbReference>
<dbReference type="InterPro" id="IPR000014">
    <property type="entry name" value="PAS"/>
</dbReference>
<dbReference type="InterPro" id="IPR035965">
    <property type="entry name" value="PAS-like_dom_sf"/>
</dbReference>
<dbReference type="InterPro" id="IPR013767">
    <property type="entry name" value="PAS_fold"/>
</dbReference>
<dbReference type="InterPro" id="IPR013655">
    <property type="entry name" value="PAS_fold_3"/>
</dbReference>
<dbReference type="PANTHER" id="PTHR10649">
    <property type="entry name" value="ARYL HYDROCARBON RECEPTOR"/>
    <property type="match status" value="1"/>
</dbReference>
<dbReference type="PANTHER" id="PTHR10649:SF9">
    <property type="entry name" value="ARYL HYDROCARBON RECEPTOR"/>
    <property type="match status" value="1"/>
</dbReference>
<dbReference type="Pfam" id="PF00010">
    <property type="entry name" value="HLH"/>
    <property type="match status" value="1"/>
</dbReference>
<dbReference type="Pfam" id="PF00989">
    <property type="entry name" value="PAS"/>
    <property type="match status" value="1"/>
</dbReference>
<dbReference type="Pfam" id="PF08447">
    <property type="entry name" value="PAS_3"/>
    <property type="match status" value="1"/>
</dbReference>
<dbReference type="SMART" id="SM00353">
    <property type="entry name" value="HLH"/>
    <property type="match status" value="1"/>
</dbReference>
<dbReference type="SMART" id="SM00086">
    <property type="entry name" value="PAC"/>
    <property type="match status" value="1"/>
</dbReference>
<dbReference type="SMART" id="SM00091">
    <property type="entry name" value="PAS"/>
    <property type="match status" value="2"/>
</dbReference>
<dbReference type="SUPFAM" id="SSF47459">
    <property type="entry name" value="HLH, helix-loop-helix DNA-binding domain"/>
    <property type="match status" value="1"/>
</dbReference>
<dbReference type="SUPFAM" id="SSF55785">
    <property type="entry name" value="PYP-like sensor domain (PAS domain)"/>
    <property type="match status" value="2"/>
</dbReference>
<dbReference type="PROSITE" id="PS50888">
    <property type="entry name" value="BHLH"/>
    <property type="match status" value="1"/>
</dbReference>
<dbReference type="PROSITE" id="PS50112">
    <property type="entry name" value="PAS"/>
    <property type="match status" value="1"/>
</dbReference>
<feature type="propeptide" id="PRO_0000013458" evidence="1">
    <location>
        <begin position="1"/>
        <end position="9"/>
    </location>
</feature>
<feature type="chain" id="PRO_0000013459" description="Aryl hydrocarbon receptor">
    <location>
        <begin position="10"/>
        <end position="883"/>
    </location>
</feature>
<feature type="domain" description="bHLH" evidence="4">
    <location>
        <begin position="26"/>
        <end position="79"/>
    </location>
</feature>
<feature type="domain" description="PAS 1" evidence="3 6">
    <location>
        <begin position="111"/>
        <end position="175"/>
    </location>
</feature>
<feature type="domain" description="PAS 2" evidence="3 6">
    <location>
        <begin position="266"/>
        <end position="336"/>
    </location>
</feature>
<feature type="domain" description="PAC" evidence="6">
    <location>
        <begin position="342"/>
        <end position="383"/>
    </location>
</feature>
<feature type="region of interest" description="Disordered" evidence="5">
    <location>
        <begin position="1"/>
        <end position="38"/>
    </location>
</feature>
<feature type="region of interest" description="DNA-binding" evidence="2">
    <location>
        <begin position="37"/>
        <end position="65"/>
    </location>
</feature>
<feature type="region of interest" description="Required for maintaining the overall integrity of the AHR:ARNT heterodimer and its transcriptional activity" evidence="2">
    <location>
        <begin position="49"/>
        <end position="81"/>
    </location>
</feature>
<feature type="region of interest" description="Required for maintaining the overall integrity of the AHR:ARNT heterodimer and its transcriptional activity" evidence="1">
    <location>
        <begin position="116"/>
        <end position="124"/>
    </location>
</feature>
<feature type="region of interest" description="Required for maintaining the overall integrity of the AHR:ARNT heterodimer and its transcriptional activity" evidence="1">
    <location>
        <begin position="260"/>
        <end position="262"/>
    </location>
</feature>
<feature type="region of interest" description="Disordered" evidence="5">
    <location>
        <begin position="421"/>
        <end position="449"/>
    </location>
</feature>
<feature type="short sequence motif" description="Nuclear localization signal 1" evidence="2">
    <location>
        <begin position="12"/>
        <end position="15"/>
    </location>
</feature>
<feature type="short sequence motif" description="Nuclear localization signal 2" evidence="2">
    <location>
        <begin position="36"/>
        <end position="41"/>
    </location>
</feature>
<feature type="short sequence motif" description="Nuclear export signal" evidence="2">
    <location>
        <begin position="63"/>
        <end position="71"/>
    </location>
</feature>
<feature type="compositionally biased region" description="Polar residues" evidence="5">
    <location>
        <begin position="436"/>
        <end position="449"/>
    </location>
</feature>
<keyword id="KW-0010">Activator</keyword>
<keyword id="KW-0013">ADP-ribosylation</keyword>
<keyword id="KW-0090">Biological rhythms</keyword>
<keyword id="KW-0131">Cell cycle</keyword>
<keyword id="KW-0963">Cytoplasm</keyword>
<keyword id="KW-0238">DNA-binding</keyword>
<keyword id="KW-0539">Nucleus</keyword>
<keyword id="KW-0675">Receptor</keyword>
<keyword id="KW-0677">Repeat</keyword>
<keyword id="KW-0678">Repressor</keyword>
<keyword id="KW-0804">Transcription</keyword>
<keyword id="KW-0805">Transcription regulation</keyword>
<gene>
    <name type="primary">Ahr</name>
</gene>
<evidence type="ECO:0000250" key="1">
    <source>
        <dbReference type="UniProtKB" id="P30561"/>
    </source>
</evidence>
<evidence type="ECO:0000250" key="2">
    <source>
        <dbReference type="UniProtKB" id="P35869"/>
    </source>
</evidence>
<evidence type="ECO:0000255" key="3">
    <source>
        <dbReference type="PROSITE-ProRule" id="PRU00140"/>
    </source>
</evidence>
<evidence type="ECO:0000255" key="4">
    <source>
        <dbReference type="PROSITE-ProRule" id="PRU00981"/>
    </source>
</evidence>
<evidence type="ECO:0000256" key="5">
    <source>
        <dbReference type="SAM" id="MobiDB-lite"/>
    </source>
</evidence>
<evidence type="ECO:0000305" key="6"/>
<evidence type="ECO:0000312" key="7">
    <source>
        <dbReference type="EMBL" id="AAL89733.1"/>
    </source>
</evidence>
<accession>Q8R4S5</accession>
<organism evidence="7">
    <name type="scientific">Mus musculus molossinus</name>
    <name type="common">Japanese house mouse</name>
    <dbReference type="NCBI Taxonomy" id="57486"/>
    <lineage>
        <taxon>Eukaryota</taxon>
        <taxon>Metazoa</taxon>
        <taxon>Chordata</taxon>
        <taxon>Craniata</taxon>
        <taxon>Vertebrata</taxon>
        <taxon>Euteleostomi</taxon>
        <taxon>Mammalia</taxon>
        <taxon>Eutheria</taxon>
        <taxon>Euarchontoglires</taxon>
        <taxon>Glires</taxon>
        <taxon>Rodentia</taxon>
        <taxon>Myomorpha</taxon>
        <taxon>Muroidea</taxon>
        <taxon>Muridae</taxon>
        <taxon>Murinae</taxon>
        <taxon>Mus</taxon>
        <taxon>Mus</taxon>
    </lineage>
</organism>
<reference evidence="7" key="1">
    <citation type="journal article" date="2002" name="Pharmacogenetics">
        <title>Sequence variation and phylogenetic history of the mouse Ahr gene.</title>
        <authorList>
            <person name="Thomas R.S."/>
            <person name="Penn S.G."/>
            <person name="Holden K."/>
            <person name="Bradfield C.A."/>
            <person name="Rank D.R."/>
        </authorList>
    </citation>
    <scope>NUCLEOTIDE SEQUENCE [MRNA]</scope>
    <source>
        <strain>MOLF/Ei</strain>
    </source>
</reference>